<feature type="chain" id="PRO_0000325374" description="3-phosphoshikimate 1-carboxyvinyltransferase">
    <location>
        <begin position="1"/>
        <end position="438"/>
    </location>
</feature>
<feature type="active site" description="Proton acceptor" evidence="1">
    <location>
        <position position="325"/>
    </location>
</feature>
<feature type="binding site" evidence="1">
    <location>
        <position position="25"/>
    </location>
    <ligand>
        <name>3-phosphoshikimate</name>
        <dbReference type="ChEBI" id="CHEBI:145989"/>
    </ligand>
</feature>
<feature type="binding site" evidence="1">
    <location>
        <position position="25"/>
    </location>
    <ligand>
        <name>phosphoenolpyruvate</name>
        <dbReference type="ChEBI" id="CHEBI:58702"/>
    </ligand>
</feature>
<feature type="binding site" evidence="1">
    <location>
        <position position="26"/>
    </location>
    <ligand>
        <name>3-phosphoshikimate</name>
        <dbReference type="ChEBI" id="CHEBI:145989"/>
    </ligand>
</feature>
<feature type="binding site" evidence="1">
    <location>
        <position position="30"/>
    </location>
    <ligand>
        <name>3-phosphoshikimate</name>
        <dbReference type="ChEBI" id="CHEBI:145989"/>
    </ligand>
</feature>
<feature type="binding site" evidence="1">
    <location>
        <position position="99"/>
    </location>
    <ligand>
        <name>phosphoenolpyruvate</name>
        <dbReference type="ChEBI" id="CHEBI:58702"/>
    </ligand>
</feature>
<feature type="binding site" evidence="1">
    <location>
        <position position="128"/>
    </location>
    <ligand>
        <name>phosphoenolpyruvate</name>
        <dbReference type="ChEBI" id="CHEBI:58702"/>
    </ligand>
</feature>
<feature type="binding site" evidence="1">
    <location>
        <position position="173"/>
    </location>
    <ligand>
        <name>3-phosphoshikimate</name>
        <dbReference type="ChEBI" id="CHEBI:145989"/>
    </ligand>
</feature>
<feature type="binding site" evidence="1">
    <location>
        <position position="175"/>
    </location>
    <ligand>
        <name>3-phosphoshikimate</name>
        <dbReference type="ChEBI" id="CHEBI:145989"/>
    </ligand>
</feature>
<feature type="binding site" evidence="1">
    <location>
        <position position="175"/>
    </location>
    <ligand>
        <name>phosphoenolpyruvate</name>
        <dbReference type="ChEBI" id="CHEBI:58702"/>
    </ligand>
</feature>
<feature type="binding site" evidence="1">
    <location>
        <position position="325"/>
    </location>
    <ligand>
        <name>3-phosphoshikimate</name>
        <dbReference type="ChEBI" id="CHEBI:145989"/>
    </ligand>
</feature>
<feature type="binding site" evidence="1">
    <location>
        <position position="352"/>
    </location>
    <ligand>
        <name>3-phosphoshikimate</name>
        <dbReference type="ChEBI" id="CHEBI:145989"/>
    </ligand>
</feature>
<feature type="binding site" evidence="1">
    <location>
        <position position="356"/>
    </location>
    <ligand>
        <name>phosphoenolpyruvate</name>
        <dbReference type="ChEBI" id="CHEBI:58702"/>
    </ligand>
</feature>
<feature type="binding site" evidence="1">
    <location>
        <position position="398"/>
    </location>
    <ligand>
        <name>phosphoenolpyruvate</name>
        <dbReference type="ChEBI" id="CHEBI:58702"/>
    </ligand>
</feature>
<keyword id="KW-0028">Amino-acid biosynthesis</keyword>
<keyword id="KW-0057">Aromatic amino acid biosynthesis</keyword>
<keyword id="KW-0963">Cytoplasm</keyword>
<keyword id="KW-0808">Transferase</keyword>
<dbReference type="EC" id="2.5.1.19" evidence="1"/>
<dbReference type="EMBL" id="BX548174">
    <property type="protein sequence ID" value="CAE19072.1"/>
    <property type="molecule type" value="Genomic_DNA"/>
</dbReference>
<dbReference type="RefSeq" id="WP_011132247.1">
    <property type="nucleotide sequence ID" value="NC_005072.1"/>
</dbReference>
<dbReference type="SMR" id="Q7V272"/>
<dbReference type="STRING" id="59919.PMM0613"/>
<dbReference type="KEGG" id="pmm:PMM0613"/>
<dbReference type="eggNOG" id="COG0128">
    <property type="taxonomic scope" value="Bacteria"/>
</dbReference>
<dbReference type="HOGENOM" id="CLU_024321_0_1_3"/>
<dbReference type="OrthoDB" id="9809920at2"/>
<dbReference type="UniPathway" id="UPA00053">
    <property type="reaction ID" value="UER00089"/>
</dbReference>
<dbReference type="Proteomes" id="UP000001026">
    <property type="component" value="Chromosome"/>
</dbReference>
<dbReference type="GO" id="GO:0005737">
    <property type="term" value="C:cytoplasm"/>
    <property type="evidence" value="ECO:0007669"/>
    <property type="project" value="UniProtKB-SubCell"/>
</dbReference>
<dbReference type="GO" id="GO:0003866">
    <property type="term" value="F:3-phosphoshikimate 1-carboxyvinyltransferase activity"/>
    <property type="evidence" value="ECO:0007669"/>
    <property type="project" value="UniProtKB-UniRule"/>
</dbReference>
<dbReference type="GO" id="GO:0008652">
    <property type="term" value="P:amino acid biosynthetic process"/>
    <property type="evidence" value="ECO:0007669"/>
    <property type="project" value="UniProtKB-KW"/>
</dbReference>
<dbReference type="GO" id="GO:0009073">
    <property type="term" value="P:aromatic amino acid family biosynthetic process"/>
    <property type="evidence" value="ECO:0007669"/>
    <property type="project" value="UniProtKB-KW"/>
</dbReference>
<dbReference type="GO" id="GO:0009423">
    <property type="term" value="P:chorismate biosynthetic process"/>
    <property type="evidence" value="ECO:0007669"/>
    <property type="project" value="UniProtKB-UniRule"/>
</dbReference>
<dbReference type="CDD" id="cd01556">
    <property type="entry name" value="EPSP_synthase"/>
    <property type="match status" value="1"/>
</dbReference>
<dbReference type="FunFam" id="3.65.10.10:FF:000005">
    <property type="entry name" value="3-phosphoshikimate 1-carboxyvinyltransferase"/>
    <property type="match status" value="1"/>
</dbReference>
<dbReference type="FunFam" id="3.65.10.10:FF:000006">
    <property type="entry name" value="3-phosphoshikimate 1-carboxyvinyltransferase"/>
    <property type="match status" value="1"/>
</dbReference>
<dbReference type="Gene3D" id="3.65.10.10">
    <property type="entry name" value="Enolpyruvate transferase domain"/>
    <property type="match status" value="2"/>
</dbReference>
<dbReference type="HAMAP" id="MF_00210">
    <property type="entry name" value="EPSP_synth"/>
    <property type="match status" value="1"/>
</dbReference>
<dbReference type="InterPro" id="IPR001986">
    <property type="entry name" value="Enolpyruvate_Tfrase_dom"/>
</dbReference>
<dbReference type="InterPro" id="IPR036968">
    <property type="entry name" value="Enolpyruvate_Tfrase_sf"/>
</dbReference>
<dbReference type="InterPro" id="IPR006264">
    <property type="entry name" value="EPSP_synthase"/>
</dbReference>
<dbReference type="InterPro" id="IPR023193">
    <property type="entry name" value="EPSP_synthase_CS"/>
</dbReference>
<dbReference type="InterPro" id="IPR013792">
    <property type="entry name" value="RNA3'P_cycl/enolpyr_Trfase_a/b"/>
</dbReference>
<dbReference type="NCBIfam" id="TIGR01356">
    <property type="entry name" value="aroA"/>
    <property type="match status" value="1"/>
</dbReference>
<dbReference type="PANTHER" id="PTHR21090">
    <property type="entry name" value="AROM/DEHYDROQUINATE SYNTHASE"/>
    <property type="match status" value="1"/>
</dbReference>
<dbReference type="PANTHER" id="PTHR21090:SF5">
    <property type="entry name" value="PENTAFUNCTIONAL AROM POLYPEPTIDE"/>
    <property type="match status" value="1"/>
</dbReference>
<dbReference type="Pfam" id="PF00275">
    <property type="entry name" value="EPSP_synthase"/>
    <property type="match status" value="1"/>
</dbReference>
<dbReference type="PIRSF" id="PIRSF000505">
    <property type="entry name" value="EPSPS"/>
    <property type="match status" value="1"/>
</dbReference>
<dbReference type="SUPFAM" id="SSF55205">
    <property type="entry name" value="EPT/RTPC-like"/>
    <property type="match status" value="1"/>
</dbReference>
<dbReference type="PROSITE" id="PS00104">
    <property type="entry name" value="EPSP_SYNTHASE_1"/>
    <property type="match status" value="1"/>
</dbReference>
<dbReference type="PROSITE" id="PS00885">
    <property type="entry name" value="EPSP_SYNTHASE_2"/>
    <property type="match status" value="1"/>
</dbReference>
<organism>
    <name type="scientific">Prochlorococcus marinus subsp. pastoris (strain CCMP1986 / NIES-2087 / MED4)</name>
    <dbReference type="NCBI Taxonomy" id="59919"/>
    <lineage>
        <taxon>Bacteria</taxon>
        <taxon>Bacillati</taxon>
        <taxon>Cyanobacteriota</taxon>
        <taxon>Cyanophyceae</taxon>
        <taxon>Synechococcales</taxon>
        <taxon>Prochlorococcaceae</taxon>
        <taxon>Prochlorococcus</taxon>
    </lineage>
</organism>
<sequence>MNTNHIRTVKGGGSLQGILNVPGDKSISHRSLIIGSIAEGETNIKGFLYSDDPLSTADCLRKLGVNIPEIKKNQPFTIKGLGIDDFKEPEEILDCGNSGTTMRLLMGLLAGQEGRNFILTGDKSLNERPMGRVSKPLSLMGGIIHGRKNGTKAPISITGNKLKGCVIGTPVASAQVKSAILLAGLNASGTTSVIEPASSRDHTERMLKAFGADINIRGELGRNIVIKSGTNLTGQNILIPGDISSAAFWMIAASIVPESEIIIKNVGLNPTRTGILNVMNEMGCNYEILDKSTIAGEPIGSINIKYVSNLKPFKVEGDILPKLIDEIPILAVAACFCSGVSEIKDAKELRVKETDRLKVMATQLKKFGANILEKEDGLIINGESKFHSAEVDSETDHRVSMSLAIASLLAKGSSKIARAEASRVSYPTFWDDLEKLIN</sequence>
<accession>Q7V272</accession>
<proteinExistence type="inferred from homology"/>
<evidence type="ECO:0000255" key="1">
    <source>
        <dbReference type="HAMAP-Rule" id="MF_00210"/>
    </source>
</evidence>
<comment type="function">
    <text evidence="1">Catalyzes the transfer of the enolpyruvyl moiety of phosphoenolpyruvate (PEP) to the 5-hydroxyl of shikimate-3-phosphate (S3P) to produce enolpyruvyl shikimate-3-phosphate and inorganic phosphate.</text>
</comment>
<comment type="catalytic activity">
    <reaction evidence="1">
        <text>3-phosphoshikimate + phosphoenolpyruvate = 5-O-(1-carboxyvinyl)-3-phosphoshikimate + phosphate</text>
        <dbReference type="Rhea" id="RHEA:21256"/>
        <dbReference type="ChEBI" id="CHEBI:43474"/>
        <dbReference type="ChEBI" id="CHEBI:57701"/>
        <dbReference type="ChEBI" id="CHEBI:58702"/>
        <dbReference type="ChEBI" id="CHEBI:145989"/>
        <dbReference type="EC" id="2.5.1.19"/>
    </reaction>
    <physiologicalReaction direction="left-to-right" evidence="1">
        <dbReference type="Rhea" id="RHEA:21257"/>
    </physiologicalReaction>
</comment>
<comment type="pathway">
    <text evidence="1">Metabolic intermediate biosynthesis; chorismate biosynthesis; chorismate from D-erythrose 4-phosphate and phosphoenolpyruvate: step 6/7.</text>
</comment>
<comment type="subunit">
    <text evidence="1">Monomer.</text>
</comment>
<comment type="subcellular location">
    <subcellularLocation>
        <location evidence="1">Cytoplasm</location>
    </subcellularLocation>
</comment>
<comment type="similarity">
    <text evidence="1">Belongs to the EPSP synthase family.</text>
</comment>
<protein>
    <recommendedName>
        <fullName evidence="1">3-phosphoshikimate 1-carboxyvinyltransferase</fullName>
        <ecNumber evidence="1">2.5.1.19</ecNumber>
    </recommendedName>
    <alternativeName>
        <fullName evidence="1">5-enolpyruvylshikimate-3-phosphate synthase</fullName>
        <shortName evidence="1">EPSP synthase</shortName>
        <shortName evidence="1">EPSPS</shortName>
    </alternativeName>
</protein>
<reference key="1">
    <citation type="journal article" date="2003" name="Nature">
        <title>Genome divergence in two Prochlorococcus ecotypes reflects oceanic niche differentiation.</title>
        <authorList>
            <person name="Rocap G."/>
            <person name="Larimer F.W."/>
            <person name="Lamerdin J.E."/>
            <person name="Malfatti S."/>
            <person name="Chain P."/>
            <person name="Ahlgren N.A."/>
            <person name="Arellano A."/>
            <person name="Coleman M."/>
            <person name="Hauser L."/>
            <person name="Hess W.R."/>
            <person name="Johnson Z.I."/>
            <person name="Land M.L."/>
            <person name="Lindell D."/>
            <person name="Post A.F."/>
            <person name="Regala W."/>
            <person name="Shah M."/>
            <person name="Shaw S.L."/>
            <person name="Steglich C."/>
            <person name="Sullivan M.B."/>
            <person name="Ting C.S."/>
            <person name="Tolonen A."/>
            <person name="Webb E.A."/>
            <person name="Zinser E.R."/>
            <person name="Chisholm S.W."/>
        </authorList>
    </citation>
    <scope>NUCLEOTIDE SEQUENCE [LARGE SCALE GENOMIC DNA]</scope>
    <source>
        <strain>CCMP1986 / NIES-2087 / MED4</strain>
    </source>
</reference>
<gene>
    <name evidence="1" type="primary">aroA</name>
    <name type="ordered locus">PMM0613</name>
</gene>
<name>AROA_PROMP</name>